<reference key="1">
    <citation type="journal article" date="2002" name="J. Bacteriol.">
        <title>Whole-genome comparison of Mycobacterium tuberculosis clinical and laboratory strains.</title>
        <authorList>
            <person name="Fleischmann R.D."/>
            <person name="Alland D."/>
            <person name="Eisen J.A."/>
            <person name="Carpenter L."/>
            <person name="White O."/>
            <person name="Peterson J.D."/>
            <person name="DeBoy R.T."/>
            <person name="Dodson R.J."/>
            <person name="Gwinn M.L."/>
            <person name="Haft D.H."/>
            <person name="Hickey E.K."/>
            <person name="Kolonay J.F."/>
            <person name="Nelson W.C."/>
            <person name="Umayam L.A."/>
            <person name="Ermolaeva M.D."/>
            <person name="Salzberg S.L."/>
            <person name="Delcher A."/>
            <person name="Utterback T.R."/>
            <person name="Weidman J.F."/>
            <person name="Khouri H.M."/>
            <person name="Gill J."/>
            <person name="Mikula A."/>
            <person name="Bishai W."/>
            <person name="Jacobs W.R. Jr."/>
            <person name="Venter J.C."/>
            <person name="Fraser C.M."/>
        </authorList>
    </citation>
    <scope>NUCLEOTIDE SEQUENCE [LARGE SCALE GENOMIC DNA]</scope>
    <source>
        <strain>CDC 1551 / Oshkosh</strain>
    </source>
</reference>
<protein>
    <recommendedName>
        <fullName>Beta-carbonic anhydrase 1</fullName>
        <shortName>Beta-CA 1</shortName>
        <ecNumber>4.2.1.1</ecNumber>
    </recommendedName>
    <alternativeName>
        <fullName>Carbonate dehydratase 1</fullName>
    </alternativeName>
    <alternativeName>
        <fullName>mtCA 1</fullName>
    </alternativeName>
</protein>
<organism>
    <name type="scientific">Mycobacterium tuberculosis (strain CDC 1551 / Oshkosh)</name>
    <dbReference type="NCBI Taxonomy" id="83331"/>
    <lineage>
        <taxon>Bacteria</taxon>
        <taxon>Bacillati</taxon>
        <taxon>Actinomycetota</taxon>
        <taxon>Actinomycetes</taxon>
        <taxon>Mycobacteriales</taxon>
        <taxon>Mycobacteriaceae</taxon>
        <taxon>Mycobacterium</taxon>
        <taxon>Mycobacterium tuberculosis complex</taxon>
    </lineage>
</organism>
<comment type="function">
    <text evidence="1">Catalyzes the reversible hydration of carbon dioxide to form bicarbonate.</text>
</comment>
<comment type="catalytic activity">
    <reaction>
        <text>hydrogencarbonate + H(+) = CO2 + H2O</text>
        <dbReference type="Rhea" id="RHEA:10748"/>
        <dbReference type="ChEBI" id="CHEBI:15377"/>
        <dbReference type="ChEBI" id="CHEBI:15378"/>
        <dbReference type="ChEBI" id="CHEBI:16526"/>
        <dbReference type="ChEBI" id="CHEBI:17544"/>
        <dbReference type="EC" id="4.2.1.1"/>
    </reaction>
</comment>
<comment type="cofactor">
    <cofactor evidence="1">
        <name>Zn(2+)</name>
        <dbReference type="ChEBI" id="CHEBI:29105"/>
    </cofactor>
    <text evidence="1">Binds 1 zinc ion per subunit.</text>
</comment>
<comment type="subunit">
    <text evidence="1">Homotetramer.</text>
</comment>
<comment type="similarity">
    <text evidence="2">Belongs to the beta-class carbonic anhydrase family.</text>
</comment>
<name>MTCA1_MYCTO</name>
<proteinExistence type="inferred from homology"/>
<evidence type="ECO:0000250" key="1"/>
<evidence type="ECO:0000305" key="2"/>
<accession>P9WPJ6</accession>
<accession>L0T7U0</accession>
<accession>P64797</accession>
<accession>Q10612</accession>
<gene>
    <name type="primary">mtcA1</name>
    <name type="synonym">canA</name>
    <name type="ordered locus">MT1322</name>
</gene>
<dbReference type="EC" id="4.2.1.1"/>
<dbReference type="EMBL" id="AE000516">
    <property type="protein sequence ID" value="AAK45583.1"/>
    <property type="molecule type" value="Genomic_DNA"/>
</dbReference>
<dbReference type="PIR" id="H70771">
    <property type="entry name" value="H70771"/>
</dbReference>
<dbReference type="SMR" id="P9WPJ6"/>
<dbReference type="KEGG" id="mtc:MT1322"/>
<dbReference type="PATRIC" id="fig|83331.31.peg.1428"/>
<dbReference type="HOGENOM" id="CLU_084253_1_2_11"/>
<dbReference type="EvolutionaryTrace" id="P9WPJ6"/>
<dbReference type="Proteomes" id="UP000001020">
    <property type="component" value="Chromosome"/>
</dbReference>
<dbReference type="GO" id="GO:0004089">
    <property type="term" value="F:carbonate dehydratase activity"/>
    <property type="evidence" value="ECO:0007669"/>
    <property type="project" value="UniProtKB-EC"/>
</dbReference>
<dbReference type="GO" id="GO:0008270">
    <property type="term" value="F:zinc ion binding"/>
    <property type="evidence" value="ECO:0007669"/>
    <property type="project" value="InterPro"/>
</dbReference>
<dbReference type="CDD" id="cd03379">
    <property type="entry name" value="beta_CA_cladeD"/>
    <property type="match status" value="1"/>
</dbReference>
<dbReference type="FunFam" id="3.40.1050.10:FF:000011">
    <property type="entry name" value="Beta-carbonic anhydrase 1"/>
    <property type="match status" value="1"/>
</dbReference>
<dbReference type="Gene3D" id="3.40.1050.10">
    <property type="entry name" value="Carbonic anhydrase"/>
    <property type="match status" value="1"/>
</dbReference>
<dbReference type="InterPro" id="IPR001765">
    <property type="entry name" value="Carbonic_anhydrase"/>
</dbReference>
<dbReference type="InterPro" id="IPR036874">
    <property type="entry name" value="Carbonic_anhydrase_sf"/>
</dbReference>
<dbReference type="PANTHER" id="PTHR43175:SF3">
    <property type="entry name" value="CARBON DISULFIDE HYDROLASE"/>
    <property type="match status" value="1"/>
</dbReference>
<dbReference type="PANTHER" id="PTHR43175">
    <property type="entry name" value="CARBONIC ANHYDRASE"/>
    <property type="match status" value="1"/>
</dbReference>
<dbReference type="Pfam" id="PF00484">
    <property type="entry name" value="Pro_CA"/>
    <property type="match status" value="1"/>
</dbReference>
<dbReference type="SMART" id="SM00947">
    <property type="entry name" value="Pro_CA"/>
    <property type="match status" value="1"/>
</dbReference>
<dbReference type="SUPFAM" id="SSF53056">
    <property type="entry name" value="beta-carbonic anhydrase, cab"/>
    <property type="match status" value="1"/>
</dbReference>
<keyword id="KW-0456">Lyase</keyword>
<keyword id="KW-0479">Metal-binding</keyword>
<keyword id="KW-1185">Reference proteome</keyword>
<keyword id="KW-0862">Zinc</keyword>
<feature type="chain" id="PRO_0000426940" description="Beta-carbonic anhydrase 1">
    <location>
        <begin position="1"/>
        <end position="163"/>
    </location>
</feature>
<feature type="binding site" evidence="1">
    <location>
        <position position="35"/>
    </location>
    <ligand>
        <name>Zn(2+)</name>
        <dbReference type="ChEBI" id="CHEBI:29105"/>
    </ligand>
</feature>
<feature type="binding site" evidence="1">
    <location>
        <position position="37"/>
    </location>
    <ligand>
        <name>Zn(2+)</name>
        <dbReference type="ChEBI" id="CHEBI:29105"/>
    </ligand>
</feature>
<feature type="binding site" evidence="1">
    <location>
        <position position="88"/>
    </location>
    <ligand>
        <name>Zn(2+)</name>
        <dbReference type="ChEBI" id="CHEBI:29105"/>
    </ligand>
</feature>
<feature type="binding site" evidence="1">
    <location>
        <position position="91"/>
    </location>
    <ligand>
        <name>Zn(2+)</name>
        <dbReference type="ChEBI" id="CHEBI:29105"/>
    </ligand>
</feature>
<sequence length="163" mass="18189">MTVTDDYLANNVDYASGFKGPLPMPPSKHIAIVACMDARLDVYRMLGIKEGEAHVIRNAGCVVTDDVIRSLAISQRLLGTREIILLHHTDCGMLTFTDDDFKRAIQDETGIRPTWSPESYPDAVEDVRQSLRRIEVNPFVTKHTSLRGFVFDVATGKLNEVTP</sequence>